<gene>
    <name evidence="1" type="primary">tig</name>
    <name type="ordered locus">PTH_0803</name>
</gene>
<organism>
    <name type="scientific">Pelotomaculum thermopropionicum (strain DSM 13744 / JCM 10971 / SI)</name>
    <dbReference type="NCBI Taxonomy" id="370438"/>
    <lineage>
        <taxon>Bacteria</taxon>
        <taxon>Bacillati</taxon>
        <taxon>Bacillota</taxon>
        <taxon>Clostridia</taxon>
        <taxon>Eubacteriales</taxon>
        <taxon>Desulfotomaculaceae</taxon>
        <taxon>Pelotomaculum</taxon>
    </lineage>
</organism>
<sequence>MKANAERIEKNTVLLEIEVDAEQLSQAMERAYRKLVKSVSVPGFRRGKTPRPIFERYVGKSALYEEAMDYLVPVAYFKAVEDTGIEPIEKPKVEVVQVEEGKPVLFKATVQVKPEVKLGQYKELELTRPSTEVSGEDVEKELVRLQNRYAKLVTLEEGTVEKGDTAIIDFAGRIDGEPIKGGEGRDYSLEIGSGSFVQGFEEQLVGMAAGETREIDVTFPENYKAEELAGKEAKFTVTVKEIKRKEIAPLDDDFAKDVSEFDTLEELRNDLSNKLKQAAENRAEYQVKMDAVTKAVDNAEVEIPEVMITNQLADMIGTLASRLSSQGLSLEDYLKYTGSTLEDMRASMMPEAERNVKTALVLEAIARAEGIKASDEEVDEEIKKMAAHYQQDPEVVRKMLEKEGQLKFIAEGLVREKTVKFLVENARILEDTNGQANE</sequence>
<name>TIG_PELTS</name>
<accession>A5D446</accession>
<evidence type="ECO:0000255" key="1">
    <source>
        <dbReference type="HAMAP-Rule" id="MF_00303"/>
    </source>
</evidence>
<proteinExistence type="inferred from homology"/>
<comment type="function">
    <text evidence="1">Involved in protein export. Acts as a chaperone by maintaining the newly synthesized protein in an open conformation. Functions as a peptidyl-prolyl cis-trans isomerase.</text>
</comment>
<comment type="catalytic activity">
    <reaction evidence="1">
        <text>[protein]-peptidylproline (omega=180) = [protein]-peptidylproline (omega=0)</text>
        <dbReference type="Rhea" id="RHEA:16237"/>
        <dbReference type="Rhea" id="RHEA-COMP:10747"/>
        <dbReference type="Rhea" id="RHEA-COMP:10748"/>
        <dbReference type="ChEBI" id="CHEBI:83833"/>
        <dbReference type="ChEBI" id="CHEBI:83834"/>
        <dbReference type="EC" id="5.2.1.8"/>
    </reaction>
</comment>
<comment type="subcellular location">
    <subcellularLocation>
        <location>Cytoplasm</location>
    </subcellularLocation>
    <text evidence="1">About half TF is bound to the ribosome near the polypeptide exit tunnel while the other half is free in the cytoplasm.</text>
</comment>
<comment type="domain">
    <text evidence="1">Consists of 3 domains; the N-terminus binds the ribosome, the middle domain has PPIase activity, while the C-terminus has intrinsic chaperone activity on its own.</text>
</comment>
<comment type="similarity">
    <text evidence="1">Belongs to the FKBP-type PPIase family. Tig subfamily.</text>
</comment>
<feature type="chain" id="PRO_1000079048" description="Trigger factor">
    <location>
        <begin position="1"/>
        <end position="438"/>
    </location>
</feature>
<feature type="domain" description="PPIase FKBP-type" evidence="1">
    <location>
        <begin position="163"/>
        <end position="248"/>
    </location>
</feature>
<protein>
    <recommendedName>
        <fullName evidence="1">Trigger factor</fullName>
        <shortName evidence="1">TF</shortName>
        <ecNumber evidence="1">5.2.1.8</ecNumber>
    </recommendedName>
    <alternativeName>
        <fullName evidence="1">PPIase</fullName>
    </alternativeName>
</protein>
<dbReference type="EC" id="5.2.1.8" evidence="1"/>
<dbReference type="EMBL" id="AP009389">
    <property type="protein sequence ID" value="BAF58984.1"/>
    <property type="molecule type" value="Genomic_DNA"/>
</dbReference>
<dbReference type="SMR" id="A5D446"/>
<dbReference type="STRING" id="370438.PTH_0803"/>
<dbReference type="KEGG" id="pth:PTH_0803"/>
<dbReference type="eggNOG" id="COG0544">
    <property type="taxonomic scope" value="Bacteria"/>
</dbReference>
<dbReference type="HOGENOM" id="CLU_033058_3_2_9"/>
<dbReference type="Proteomes" id="UP000006556">
    <property type="component" value="Chromosome"/>
</dbReference>
<dbReference type="GO" id="GO:0005737">
    <property type="term" value="C:cytoplasm"/>
    <property type="evidence" value="ECO:0007669"/>
    <property type="project" value="UniProtKB-SubCell"/>
</dbReference>
<dbReference type="GO" id="GO:0003755">
    <property type="term" value="F:peptidyl-prolyl cis-trans isomerase activity"/>
    <property type="evidence" value="ECO:0007669"/>
    <property type="project" value="UniProtKB-UniRule"/>
</dbReference>
<dbReference type="GO" id="GO:0044183">
    <property type="term" value="F:protein folding chaperone"/>
    <property type="evidence" value="ECO:0007669"/>
    <property type="project" value="TreeGrafter"/>
</dbReference>
<dbReference type="GO" id="GO:0043022">
    <property type="term" value="F:ribosome binding"/>
    <property type="evidence" value="ECO:0007669"/>
    <property type="project" value="TreeGrafter"/>
</dbReference>
<dbReference type="GO" id="GO:0051083">
    <property type="term" value="P:'de novo' cotranslational protein folding"/>
    <property type="evidence" value="ECO:0007669"/>
    <property type="project" value="TreeGrafter"/>
</dbReference>
<dbReference type="GO" id="GO:0051301">
    <property type="term" value="P:cell division"/>
    <property type="evidence" value="ECO:0007669"/>
    <property type="project" value="UniProtKB-KW"/>
</dbReference>
<dbReference type="GO" id="GO:0061077">
    <property type="term" value="P:chaperone-mediated protein folding"/>
    <property type="evidence" value="ECO:0007669"/>
    <property type="project" value="TreeGrafter"/>
</dbReference>
<dbReference type="GO" id="GO:0015031">
    <property type="term" value="P:protein transport"/>
    <property type="evidence" value="ECO:0007669"/>
    <property type="project" value="UniProtKB-UniRule"/>
</dbReference>
<dbReference type="GO" id="GO:0043335">
    <property type="term" value="P:protein unfolding"/>
    <property type="evidence" value="ECO:0007669"/>
    <property type="project" value="TreeGrafter"/>
</dbReference>
<dbReference type="FunFam" id="3.10.50.40:FF:000001">
    <property type="entry name" value="Trigger factor"/>
    <property type="match status" value="1"/>
</dbReference>
<dbReference type="Gene3D" id="3.10.50.40">
    <property type="match status" value="1"/>
</dbReference>
<dbReference type="Gene3D" id="3.30.70.1050">
    <property type="entry name" value="Trigger factor ribosome-binding domain"/>
    <property type="match status" value="1"/>
</dbReference>
<dbReference type="Gene3D" id="1.10.3120.10">
    <property type="entry name" value="Trigger factor, C-terminal domain"/>
    <property type="match status" value="1"/>
</dbReference>
<dbReference type="HAMAP" id="MF_00303">
    <property type="entry name" value="Trigger_factor_Tig"/>
    <property type="match status" value="1"/>
</dbReference>
<dbReference type="InterPro" id="IPR046357">
    <property type="entry name" value="PPIase_dom_sf"/>
</dbReference>
<dbReference type="InterPro" id="IPR001179">
    <property type="entry name" value="PPIase_FKBP_dom"/>
</dbReference>
<dbReference type="InterPro" id="IPR005215">
    <property type="entry name" value="Trig_fac"/>
</dbReference>
<dbReference type="InterPro" id="IPR008880">
    <property type="entry name" value="Trigger_fac_C"/>
</dbReference>
<dbReference type="InterPro" id="IPR037041">
    <property type="entry name" value="Trigger_fac_C_sf"/>
</dbReference>
<dbReference type="InterPro" id="IPR008881">
    <property type="entry name" value="Trigger_fac_ribosome-bd_bac"/>
</dbReference>
<dbReference type="InterPro" id="IPR036611">
    <property type="entry name" value="Trigger_fac_ribosome-bd_sf"/>
</dbReference>
<dbReference type="InterPro" id="IPR027304">
    <property type="entry name" value="Trigger_fact/SurA_dom_sf"/>
</dbReference>
<dbReference type="NCBIfam" id="TIGR00115">
    <property type="entry name" value="tig"/>
    <property type="match status" value="1"/>
</dbReference>
<dbReference type="PANTHER" id="PTHR30560">
    <property type="entry name" value="TRIGGER FACTOR CHAPERONE AND PEPTIDYL-PROLYL CIS/TRANS ISOMERASE"/>
    <property type="match status" value="1"/>
</dbReference>
<dbReference type="PANTHER" id="PTHR30560:SF3">
    <property type="entry name" value="TRIGGER FACTOR-LIKE PROTEIN TIG, CHLOROPLASTIC"/>
    <property type="match status" value="1"/>
</dbReference>
<dbReference type="Pfam" id="PF00254">
    <property type="entry name" value="FKBP_C"/>
    <property type="match status" value="1"/>
</dbReference>
<dbReference type="Pfam" id="PF05698">
    <property type="entry name" value="Trigger_C"/>
    <property type="match status" value="1"/>
</dbReference>
<dbReference type="Pfam" id="PF05697">
    <property type="entry name" value="Trigger_N"/>
    <property type="match status" value="1"/>
</dbReference>
<dbReference type="PIRSF" id="PIRSF003095">
    <property type="entry name" value="Trigger_factor"/>
    <property type="match status" value="1"/>
</dbReference>
<dbReference type="SUPFAM" id="SSF54534">
    <property type="entry name" value="FKBP-like"/>
    <property type="match status" value="1"/>
</dbReference>
<dbReference type="SUPFAM" id="SSF109998">
    <property type="entry name" value="Triger factor/SurA peptide-binding domain-like"/>
    <property type="match status" value="1"/>
</dbReference>
<dbReference type="SUPFAM" id="SSF102735">
    <property type="entry name" value="Trigger factor ribosome-binding domain"/>
    <property type="match status" value="1"/>
</dbReference>
<dbReference type="PROSITE" id="PS50059">
    <property type="entry name" value="FKBP_PPIASE"/>
    <property type="match status" value="1"/>
</dbReference>
<reference key="1">
    <citation type="journal article" date="2008" name="Genome Res.">
        <title>The genome of Pelotomaculum thermopropionicum reveals niche-associated evolution in anaerobic microbiota.</title>
        <authorList>
            <person name="Kosaka T."/>
            <person name="Kato S."/>
            <person name="Shimoyama T."/>
            <person name="Ishii S."/>
            <person name="Abe T."/>
            <person name="Watanabe K."/>
        </authorList>
    </citation>
    <scope>NUCLEOTIDE SEQUENCE [LARGE SCALE GENOMIC DNA]</scope>
    <source>
        <strain>DSM 13744 / JCM 10971 / SI</strain>
    </source>
</reference>
<keyword id="KW-0131">Cell cycle</keyword>
<keyword id="KW-0132">Cell division</keyword>
<keyword id="KW-0143">Chaperone</keyword>
<keyword id="KW-0963">Cytoplasm</keyword>
<keyword id="KW-0413">Isomerase</keyword>
<keyword id="KW-1185">Reference proteome</keyword>
<keyword id="KW-0697">Rotamase</keyword>